<proteinExistence type="evidence at transcript level"/>
<evidence type="ECO:0000255" key="1">
    <source>
        <dbReference type="PROSITE-ProRule" id="PRU00047"/>
    </source>
</evidence>
<evidence type="ECO:0000255" key="2">
    <source>
        <dbReference type="PROSITE-ProRule" id="PRU00541"/>
    </source>
</evidence>
<evidence type="ECO:0000255" key="3">
    <source>
        <dbReference type="PROSITE-ProRule" id="PRU00542"/>
    </source>
</evidence>
<evidence type="ECO:0000305" key="4"/>
<comment type="catalytic activity">
    <reaction>
        <text>ATP + H2O = ADP + phosphate + H(+)</text>
        <dbReference type="Rhea" id="RHEA:13065"/>
        <dbReference type="ChEBI" id="CHEBI:15377"/>
        <dbReference type="ChEBI" id="CHEBI:15378"/>
        <dbReference type="ChEBI" id="CHEBI:30616"/>
        <dbReference type="ChEBI" id="CHEBI:43474"/>
        <dbReference type="ChEBI" id="CHEBI:456216"/>
        <dbReference type="EC" id="3.6.4.13"/>
    </reaction>
</comment>
<comment type="domain">
    <text>The Q motif is unique to and characteristic of the DEAD box family of RNA helicases and controls ATP binding and hydrolysis.</text>
</comment>
<comment type="similarity">
    <text evidence="4">Belongs to the DEAD box helicase family. DDX41 subfamily.</text>
</comment>
<organism>
    <name type="scientific">Arabidopsis thaliana</name>
    <name type="common">Mouse-ear cress</name>
    <dbReference type="NCBI Taxonomy" id="3702"/>
    <lineage>
        <taxon>Eukaryota</taxon>
        <taxon>Viridiplantae</taxon>
        <taxon>Streptophyta</taxon>
        <taxon>Embryophyta</taxon>
        <taxon>Tracheophyta</taxon>
        <taxon>Spermatophyta</taxon>
        <taxon>Magnoliopsida</taxon>
        <taxon>eudicotyledons</taxon>
        <taxon>Gunneridae</taxon>
        <taxon>Pentapetalae</taxon>
        <taxon>rosids</taxon>
        <taxon>malvids</taxon>
        <taxon>Brassicales</taxon>
        <taxon>Brassicaceae</taxon>
        <taxon>Camelineae</taxon>
        <taxon>Arabidopsis</taxon>
    </lineage>
</organism>
<name>RH35_ARATH</name>
<sequence>MESIMEEADSYIEYVSVAERRAIAAQKILQRKGKASELEEEADKEKLAEAKPSLLVQATQLKRDVPEVSATEQIILQEKEMMEHLSDKKTLMSVRELAKGITYTEPLLTGWKPPLHIRKMSSKQRDLIRKQWHIIVNGDDIPPPIKNFKDMKFPRPVLDTLKEKGIVQPTPIQVQGLPVILAGRDMIGIAFTGSGKTLVFVLPMIMIALQEEMMMPIAAGEGPIGLIVCPSRELARQTYEVVEQFVAPLVEAGYPPLRSLLCIGGIDMRSQLEVVKRGVHIVVATPGRLKDMLAKKKMSLDACRYLTLDEADRLVDLGFEDDIREVFDHFKSQRQTLLFSATMPTKIQIFARSALVKPVTVNVGRAGAANLDVIQEVEYVKQEAKIVYLLECLQKTSPPVLIFCENKADVDDIHEYLLLKGVEAVAIHGGKDQEDREYAISSFKAGKKDVLVATDVASKGLDFPDIQHVINYDMPAEIENYVHRIGRTGRCGKTGIATTFINKNQSETTLLDLKHLLQEAKQRIPPVLAELNDPMEEAETIANASGVKGCAYCGGLGHRIRDCPKLEHQKSVAISNSRKDYFGSGGYRGEI</sequence>
<protein>
    <recommendedName>
        <fullName>DEAD-box ATP-dependent RNA helicase 35</fullName>
        <ecNumber>3.6.4.13</ecNumber>
    </recommendedName>
</protein>
<feature type="chain" id="PRO_0000239175" description="DEAD-box ATP-dependent RNA helicase 35">
    <location>
        <begin position="1"/>
        <end position="591"/>
    </location>
</feature>
<feature type="domain" description="Helicase ATP-binding" evidence="2">
    <location>
        <begin position="177"/>
        <end position="361"/>
    </location>
</feature>
<feature type="domain" description="Helicase C-terminal" evidence="3">
    <location>
        <begin position="372"/>
        <end position="532"/>
    </location>
</feature>
<feature type="zinc finger region" description="CCHC-type" evidence="1">
    <location>
        <begin position="548"/>
        <end position="565"/>
    </location>
</feature>
<feature type="short sequence motif" description="Q motif">
    <location>
        <begin position="146"/>
        <end position="174"/>
    </location>
</feature>
<feature type="short sequence motif" description="DEAD box">
    <location>
        <begin position="309"/>
        <end position="312"/>
    </location>
</feature>
<feature type="binding site" evidence="2">
    <location>
        <begin position="190"/>
        <end position="197"/>
    </location>
    <ligand>
        <name>ATP</name>
        <dbReference type="ChEBI" id="CHEBI:30616"/>
    </ligand>
</feature>
<gene>
    <name type="primary">RH35</name>
    <name type="ordered locus">At5g51280</name>
    <name type="ORF">MWD22.23</name>
</gene>
<keyword id="KW-0067">ATP-binding</keyword>
<keyword id="KW-0347">Helicase</keyword>
<keyword id="KW-0378">Hydrolase</keyword>
<keyword id="KW-0479">Metal-binding</keyword>
<keyword id="KW-0547">Nucleotide-binding</keyword>
<keyword id="KW-1185">Reference proteome</keyword>
<keyword id="KW-0694">RNA-binding</keyword>
<keyword id="KW-0862">Zinc</keyword>
<keyword id="KW-0863">Zinc-finger</keyword>
<reference key="1">
    <citation type="journal article" date="2000" name="DNA Res.">
        <title>Structural analysis of Arabidopsis thaliana chromosome 5. X. Sequence features of the regions of 3,076,755 bp covered by sixty P1 and TAC clones.</title>
        <authorList>
            <person name="Sato S."/>
            <person name="Nakamura Y."/>
            <person name="Kaneko T."/>
            <person name="Katoh T."/>
            <person name="Asamizu E."/>
            <person name="Kotani H."/>
            <person name="Tabata S."/>
        </authorList>
    </citation>
    <scope>NUCLEOTIDE SEQUENCE [LARGE SCALE GENOMIC DNA]</scope>
    <source>
        <strain>cv. Columbia</strain>
    </source>
</reference>
<reference key="2">
    <citation type="journal article" date="2017" name="Plant J.">
        <title>Araport11: a complete reannotation of the Arabidopsis thaliana reference genome.</title>
        <authorList>
            <person name="Cheng C.Y."/>
            <person name="Krishnakumar V."/>
            <person name="Chan A.P."/>
            <person name="Thibaud-Nissen F."/>
            <person name="Schobel S."/>
            <person name="Town C.D."/>
        </authorList>
    </citation>
    <scope>GENOME REANNOTATION</scope>
    <source>
        <strain>cv. Columbia</strain>
    </source>
</reference>
<reference key="3">
    <citation type="submission" date="2006-07" db="EMBL/GenBank/DDBJ databases">
        <title>Large-scale analysis of RIKEN Arabidopsis full-length (RAFL) cDNAs.</title>
        <authorList>
            <person name="Totoki Y."/>
            <person name="Seki M."/>
            <person name="Ishida J."/>
            <person name="Nakajima M."/>
            <person name="Enju A."/>
            <person name="Kamiya A."/>
            <person name="Narusaka M."/>
            <person name="Shin-i T."/>
            <person name="Nakagawa M."/>
            <person name="Sakamoto N."/>
            <person name="Oishi K."/>
            <person name="Kohara Y."/>
            <person name="Kobayashi M."/>
            <person name="Toyoda A."/>
            <person name="Sakaki Y."/>
            <person name="Sakurai T."/>
            <person name="Iida K."/>
            <person name="Akiyama K."/>
            <person name="Satou M."/>
            <person name="Toyoda T."/>
            <person name="Konagaya A."/>
            <person name="Carninci P."/>
            <person name="Kawai J."/>
            <person name="Hayashizaki Y."/>
            <person name="Shinozaki K."/>
        </authorList>
    </citation>
    <scope>NUCLEOTIDE SEQUENCE [LARGE SCALE MRNA]</scope>
    <source>
        <strain>cv. Columbia</strain>
    </source>
</reference>
<reference key="4">
    <citation type="journal article" date="2004" name="Plant Biotechnol. J.">
        <title>DEAD-box RNA helicases in Arabidopsis thaliana: establishing a link between quantitative expression, gene structure and evolution of a family of genes.</title>
        <authorList>
            <person name="Mingam A."/>
            <person name="Toffano-Nioche C."/>
            <person name="Brunaud V."/>
            <person name="Boudet N."/>
            <person name="Kreis M."/>
            <person name="Lecharny A."/>
        </authorList>
    </citation>
    <scope>GENE FAMILY</scope>
    <scope>NOMENCLATURE</scope>
</reference>
<reference key="5">
    <citation type="journal article" date="2013" name="PLoS ONE">
        <title>Genome-wide comparative in silico analysis of the RNA helicase gene family in Zea mays and Glycine max: a comparison with Arabidopsis and Oryza sativa.</title>
        <authorList>
            <person name="Xu R."/>
            <person name="Zhang S."/>
            <person name="Huang J."/>
            <person name="Zheng C."/>
        </authorList>
    </citation>
    <scope>GENE FAMILY</scope>
</reference>
<dbReference type="EC" id="3.6.4.13"/>
<dbReference type="EMBL" id="AB023044">
    <property type="protein sequence ID" value="BAA97391.1"/>
    <property type="molecule type" value="Genomic_DNA"/>
</dbReference>
<dbReference type="EMBL" id="CP002688">
    <property type="protein sequence ID" value="AED96061.1"/>
    <property type="molecule type" value="Genomic_DNA"/>
</dbReference>
<dbReference type="EMBL" id="AK226380">
    <property type="protein sequence ID" value="BAE98527.1"/>
    <property type="molecule type" value="mRNA"/>
</dbReference>
<dbReference type="RefSeq" id="NP_199941.1">
    <property type="nucleotide sequence ID" value="NM_124507.5"/>
</dbReference>
<dbReference type="SMR" id="Q9LU46"/>
<dbReference type="BioGRID" id="20447">
    <property type="interactions" value="5"/>
</dbReference>
<dbReference type="FunCoup" id="Q9LU46">
    <property type="interactions" value="4971"/>
</dbReference>
<dbReference type="IntAct" id="Q9LU46">
    <property type="interactions" value="1"/>
</dbReference>
<dbReference type="STRING" id="3702.Q9LU46"/>
<dbReference type="GlyGen" id="Q9LU46">
    <property type="glycosylation" value="1 site"/>
</dbReference>
<dbReference type="PaxDb" id="3702-AT5G51280.1"/>
<dbReference type="ProteomicsDB" id="236961"/>
<dbReference type="DNASU" id="835202"/>
<dbReference type="EnsemblPlants" id="AT5G51280.1">
    <property type="protein sequence ID" value="AT5G51280.1"/>
    <property type="gene ID" value="AT5G51280"/>
</dbReference>
<dbReference type="GeneID" id="835202"/>
<dbReference type="Gramene" id="AT5G51280.1">
    <property type="protein sequence ID" value="AT5G51280.1"/>
    <property type="gene ID" value="AT5G51280"/>
</dbReference>
<dbReference type="KEGG" id="ath:AT5G51280"/>
<dbReference type="Araport" id="AT5G51280"/>
<dbReference type="TAIR" id="AT5G51280"/>
<dbReference type="eggNOG" id="KOG0341">
    <property type="taxonomic scope" value="Eukaryota"/>
</dbReference>
<dbReference type="HOGENOM" id="CLU_003041_16_5_1"/>
<dbReference type="InParanoid" id="Q9LU46"/>
<dbReference type="OMA" id="FKTIWTL"/>
<dbReference type="OrthoDB" id="196131at2759"/>
<dbReference type="PhylomeDB" id="Q9LU46"/>
<dbReference type="PRO" id="PR:Q9LU46"/>
<dbReference type="Proteomes" id="UP000006548">
    <property type="component" value="Chromosome 5"/>
</dbReference>
<dbReference type="ExpressionAtlas" id="Q9LU46">
    <property type="expression patterns" value="baseline and differential"/>
</dbReference>
<dbReference type="GO" id="GO:0005524">
    <property type="term" value="F:ATP binding"/>
    <property type="evidence" value="ECO:0007669"/>
    <property type="project" value="UniProtKB-KW"/>
</dbReference>
<dbReference type="GO" id="GO:0016887">
    <property type="term" value="F:ATP hydrolysis activity"/>
    <property type="evidence" value="ECO:0007669"/>
    <property type="project" value="RHEA"/>
</dbReference>
<dbReference type="GO" id="GO:0003723">
    <property type="term" value="F:RNA binding"/>
    <property type="evidence" value="ECO:0007669"/>
    <property type="project" value="UniProtKB-KW"/>
</dbReference>
<dbReference type="GO" id="GO:0003724">
    <property type="term" value="F:RNA helicase activity"/>
    <property type="evidence" value="ECO:0007669"/>
    <property type="project" value="UniProtKB-EC"/>
</dbReference>
<dbReference type="GO" id="GO:0008270">
    <property type="term" value="F:zinc ion binding"/>
    <property type="evidence" value="ECO:0007669"/>
    <property type="project" value="UniProtKB-KW"/>
</dbReference>
<dbReference type="GO" id="GO:0000398">
    <property type="term" value="P:mRNA splicing, via spliceosome"/>
    <property type="evidence" value="ECO:0007669"/>
    <property type="project" value="InterPro"/>
</dbReference>
<dbReference type="CDD" id="cd17951">
    <property type="entry name" value="DEADc_DDX41"/>
    <property type="match status" value="1"/>
</dbReference>
<dbReference type="CDD" id="cd18787">
    <property type="entry name" value="SF2_C_DEAD"/>
    <property type="match status" value="1"/>
</dbReference>
<dbReference type="FunFam" id="3.40.50.300:FF:000449">
    <property type="entry name" value="Probable ATP-dependent RNA helicase DDX41"/>
    <property type="match status" value="1"/>
</dbReference>
<dbReference type="FunFam" id="3.40.50.300:FF:000657">
    <property type="entry name" value="Probable ATP-dependent RNA helicase DDX41"/>
    <property type="match status" value="1"/>
</dbReference>
<dbReference type="Gene3D" id="3.40.50.300">
    <property type="entry name" value="P-loop containing nucleotide triphosphate hydrolases"/>
    <property type="match status" value="2"/>
</dbReference>
<dbReference type="InterPro" id="IPR011545">
    <property type="entry name" value="DEAD/DEAH_box_helicase_dom"/>
</dbReference>
<dbReference type="InterPro" id="IPR044113">
    <property type="entry name" value="DEADc_DDX41"/>
</dbReference>
<dbReference type="InterPro" id="IPR014001">
    <property type="entry name" value="Helicase_ATP-bd"/>
</dbReference>
<dbReference type="InterPro" id="IPR001650">
    <property type="entry name" value="Helicase_C-like"/>
</dbReference>
<dbReference type="InterPro" id="IPR027417">
    <property type="entry name" value="P-loop_NTPase"/>
</dbReference>
<dbReference type="InterPro" id="IPR014014">
    <property type="entry name" value="RNA_helicase_DEAD_Q_motif"/>
</dbReference>
<dbReference type="InterPro" id="IPR001878">
    <property type="entry name" value="Znf_CCHC"/>
</dbReference>
<dbReference type="InterPro" id="IPR036875">
    <property type="entry name" value="Znf_CCHC_sf"/>
</dbReference>
<dbReference type="PANTHER" id="PTHR47958">
    <property type="entry name" value="ATP-DEPENDENT RNA HELICASE DBP3"/>
    <property type="match status" value="1"/>
</dbReference>
<dbReference type="Pfam" id="PF00270">
    <property type="entry name" value="DEAD"/>
    <property type="match status" value="1"/>
</dbReference>
<dbReference type="Pfam" id="PF00271">
    <property type="entry name" value="Helicase_C"/>
    <property type="match status" value="1"/>
</dbReference>
<dbReference type="Pfam" id="PF00098">
    <property type="entry name" value="zf-CCHC"/>
    <property type="match status" value="1"/>
</dbReference>
<dbReference type="SMART" id="SM00487">
    <property type="entry name" value="DEXDc"/>
    <property type="match status" value="1"/>
</dbReference>
<dbReference type="SMART" id="SM00490">
    <property type="entry name" value="HELICc"/>
    <property type="match status" value="1"/>
</dbReference>
<dbReference type="SMART" id="SM00343">
    <property type="entry name" value="ZnF_C2HC"/>
    <property type="match status" value="1"/>
</dbReference>
<dbReference type="SUPFAM" id="SSF52540">
    <property type="entry name" value="P-loop containing nucleoside triphosphate hydrolases"/>
    <property type="match status" value="1"/>
</dbReference>
<dbReference type="SUPFAM" id="SSF57756">
    <property type="entry name" value="Retrovirus zinc finger-like domains"/>
    <property type="match status" value="1"/>
</dbReference>
<dbReference type="PROSITE" id="PS51192">
    <property type="entry name" value="HELICASE_ATP_BIND_1"/>
    <property type="match status" value="1"/>
</dbReference>
<dbReference type="PROSITE" id="PS51194">
    <property type="entry name" value="HELICASE_CTER"/>
    <property type="match status" value="1"/>
</dbReference>
<dbReference type="PROSITE" id="PS51195">
    <property type="entry name" value="Q_MOTIF"/>
    <property type="match status" value="1"/>
</dbReference>
<dbReference type="PROSITE" id="PS50158">
    <property type="entry name" value="ZF_CCHC"/>
    <property type="match status" value="1"/>
</dbReference>
<accession>Q9LU46</accession>
<accession>Q0WWH1</accession>